<feature type="chain" id="PRO_0000293278" description="Small ribosomal subunit protein uS4">
    <location>
        <begin position="1"/>
        <end position="206"/>
    </location>
</feature>
<feature type="domain" description="S4 RNA-binding" evidence="1">
    <location>
        <begin position="96"/>
        <end position="156"/>
    </location>
</feature>
<name>RS4_ECOK1</name>
<protein>
    <recommendedName>
        <fullName evidence="1">Small ribosomal subunit protein uS4</fullName>
    </recommendedName>
    <alternativeName>
        <fullName evidence="2">30S ribosomal protein S4</fullName>
    </alternativeName>
</protein>
<reference key="1">
    <citation type="journal article" date="2007" name="J. Bacteriol.">
        <title>The genome sequence of avian pathogenic Escherichia coli strain O1:K1:H7 shares strong similarities with human extraintestinal pathogenic E. coli genomes.</title>
        <authorList>
            <person name="Johnson T.J."/>
            <person name="Kariyawasam S."/>
            <person name="Wannemuehler Y."/>
            <person name="Mangiamele P."/>
            <person name="Johnson S.J."/>
            <person name="Doetkott C."/>
            <person name="Skyberg J.A."/>
            <person name="Lynne A.M."/>
            <person name="Johnson J.R."/>
            <person name="Nolan L.K."/>
        </authorList>
    </citation>
    <scope>NUCLEOTIDE SEQUENCE [LARGE SCALE GENOMIC DNA]</scope>
</reference>
<gene>
    <name evidence="1" type="primary">rpsD</name>
    <name type="ordered locus">Ecok1_32830</name>
    <name type="ORF">APECO1_3151</name>
</gene>
<comment type="function">
    <text evidence="1">One of the primary rRNA binding proteins, it binds directly to 16S rRNA where it nucleates assembly of the body of the 30S subunit.</text>
</comment>
<comment type="function">
    <text evidence="1">With S5 and S12 plays an important role in translational accuracy.</text>
</comment>
<comment type="subunit">
    <text evidence="1">Part of the 30S ribosomal subunit. Contacts protein S5. The interaction surface between S4 and S5 is involved in control of translational fidelity.</text>
</comment>
<comment type="similarity">
    <text evidence="1">Belongs to the universal ribosomal protein uS4 family.</text>
</comment>
<dbReference type="EMBL" id="CP000468">
    <property type="protein sequence ID" value="ABJ02777.1"/>
    <property type="molecule type" value="Genomic_DNA"/>
</dbReference>
<dbReference type="RefSeq" id="WP_000135224.1">
    <property type="nucleotide sequence ID" value="NZ_CADILS010000044.1"/>
</dbReference>
<dbReference type="SMR" id="A1AGI7"/>
<dbReference type="GeneID" id="93778691"/>
<dbReference type="KEGG" id="ecv:APECO1_3151"/>
<dbReference type="HOGENOM" id="CLU_092403_0_2_6"/>
<dbReference type="Proteomes" id="UP000008216">
    <property type="component" value="Chromosome"/>
</dbReference>
<dbReference type="GO" id="GO:0015935">
    <property type="term" value="C:small ribosomal subunit"/>
    <property type="evidence" value="ECO:0007669"/>
    <property type="project" value="InterPro"/>
</dbReference>
<dbReference type="GO" id="GO:0019843">
    <property type="term" value="F:rRNA binding"/>
    <property type="evidence" value="ECO:0007669"/>
    <property type="project" value="UniProtKB-UniRule"/>
</dbReference>
<dbReference type="GO" id="GO:0003735">
    <property type="term" value="F:structural constituent of ribosome"/>
    <property type="evidence" value="ECO:0007669"/>
    <property type="project" value="InterPro"/>
</dbReference>
<dbReference type="GO" id="GO:0042274">
    <property type="term" value="P:ribosomal small subunit biogenesis"/>
    <property type="evidence" value="ECO:0007669"/>
    <property type="project" value="TreeGrafter"/>
</dbReference>
<dbReference type="GO" id="GO:0006412">
    <property type="term" value="P:translation"/>
    <property type="evidence" value="ECO:0007669"/>
    <property type="project" value="UniProtKB-UniRule"/>
</dbReference>
<dbReference type="CDD" id="cd00165">
    <property type="entry name" value="S4"/>
    <property type="match status" value="1"/>
</dbReference>
<dbReference type="FunFam" id="1.10.1050.10:FF:000001">
    <property type="entry name" value="30S ribosomal protein S4"/>
    <property type="match status" value="1"/>
</dbReference>
<dbReference type="FunFam" id="3.10.290.10:FF:000001">
    <property type="entry name" value="30S ribosomal protein S4"/>
    <property type="match status" value="1"/>
</dbReference>
<dbReference type="Gene3D" id="1.10.1050.10">
    <property type="entry name" value="Ribosomal Protein S4 Delta 41, Chain A, domain 1"/>
    <property type="match status" value="1"/>
</dbReference>
<dbReference type="Gene3D" id="3.10.290.10">
    <property type="entry name" value="RNA-binding S4 domain"/>
    <property type="match status" value="1"/>
</dbReference>
<dbReference type="HAMAP" id="MF_01306_B">
    <property type="entry name" value="Ribosomal_uS4_B"/>
    <property type="match status" value="1"/>
</dbReference>
<dbReference type="InterPro" id="IPR022801">
    <property type="entry name" value="Ribosomal_uS4"/>
</dbReference>
<dbReference type="InterPro" id="IPR005709">
    <property type="entry name" value="Ribosomal_uS4_bac-type"/>
</dbReference>
<dbReference type="InterPro" id="IPR018079">
    <property type="entry name" value="Ribosomal_uS4_CS"/>
</dbReference>
<dbReference type="InterPro" id="IPR001912">
    <property type="entry name" value="Ribosomal_uS4_N"/>
</dbReference>
<dbReference type="InterPro" id="IPR002942">
    <property type="entry name" value="S4_RNA-bd"/>
</dbReference>
<dbReference type="InterPro" id="IPR036986">
    <property type="entry name" value="S4_RNA-bd_sf"/>
</dbReference>
<dbReference type="NCBIfam" id="NF003717">
    <property type="entry name" value="PRK05327.1"/>
    <property type="match status" value="1"/>
</dbReference>
<dbReference type="NCBIfam" id="TIGR01017">
    <property type="entry name" value="rpsD_bact"/>
    <property type="match status" value="1"/>
</dbReference>
<dbReference type="PANTHER" id="PTHR11831">
    <property type="entry name" value="30S 40S RIBOSOMAL PROTEIN"/>
    <property type="match status" value="1"/>
</dbReference>
<dbReference type="PANTHER" id="PTHR11831:SF4">
    <property type="entry name" value="SMALL RIBOSOMAL SUBUNIT PROTEIN US4M"/>
    <property type="match status" value="1"/>
</dbReference>
<dbReference type="Pfam" id="PF00163">
    <property type="entry name" value="Ribosomal_S4"/>
    <property type="match status" value="1"/>
</dbReference>
<dbReference type="Pfam" id="PF01479">
    <property type="entry name" value="S4"/>
    <property type="match status" value="1"/>
</dbReference>
<dbReference type="SMART" id="SM01390">
    <property type="entry name" value="Ribosomal_S4"/>
    <property type="match status" value="1"/>
</dbReference>
<dbReference type="SMART" id="SM00363">
    <property type="entry name" value="S4"/>
    <property type="match status" value="1"/>
</dbReference>
<dbReference type="SUPFAM" id="SSF55174">
    <property type="entry name" value="Alpha-L RNA-binding motif"/>
    <property type="match status" value="1"/>
</dbReference>
<dbReference type="PROSITE" id="PS00632">
    <property type="entry name" value="RIBOSOMAL_S4"/>
    <property type="match status" value="1"/>
</dbReference>
<dbReference type="PROSITE" id="PS50889">
    <property type="entry name" value="S4"/>
    <property type="match status" value="1"/>
</dbReference>
<organism>
    <name type="scientific">Escherichia coli O1:K1 / APEC</name>
    <dbReference type="NCBI Taxonomy" id="405955"/>
    <lineage>
        <taxon>Bacteria</taxon>
        <taxon>Pseudomonadati</taxon>
        <taxon>Pseudomonadota</taxon>
        <taxon>Gammaproteobacteria</taxon>
        <taxon>Enterobacterales</taxon>
        <taxon>Enterobacteriaceae</taxon>
        <taxon>Escherichia</taxon>
    </lineage>
</organism>
<sequence length="206" mass="23469">MARYLGPKLKLSRREGTDLFLKSGVRAIDTKCKIEQAPGQHGARKPRLSDYGVQLREKQKVRRIYGVLERQFRNYYKEAARLKGNTGENLLALLEGRLDNVVYRMGFGATRAEARQLVSHKAIMVNGRVVNIASYQVSPNDVVSIREKAKKQSRVKAALELAEQREKPTWLEVDAGKMEGTFKRKPERSDLSADINEHLIVELYSK</sequence>
<proteinExistence type="inferred from homology"/>
<evidence type="ECO:0000255" key="1">
    <source>
        <dbReference type="HAMAP-Rule" id="MF_01306"/>
    </source>
</evidence>
<evidence type="ECO:0000305" key="2"/>
<accession>A1AGI7</accession>
<keyword id="KW-1185">Reference proteome</keyword>
<keyword id="KW-0687">Ribonucleoprotein</keyword>
<keyword id="KW-0689">Ribosomal protein</keyword>
<keyword id="KW-0694">RNA-binding</keyword>
<keyword id="KW-0699">rRNA-binding</keyword>